<feature type="chain" id="PRO_0000053707" description="Androgen receptor">
    <location>
        <begin position="1"/>
        <end position="899"/>
    </location>
</feature>
<feature type="domain" description="NR LBD" evidence="5">
    <location>
        <begin position="648"/>
        <end position="879"/>
    </location>
</feature>
<feature type="DNA-binding region" description="Nuclear receptor" evidence="4">
    <location>
        <begin position="538"/>
        <end position="611"/>
    </location>
</feature>
<feature type="zinc finger region" description="NR C4-type" evidence="4">
    <location>
        <begin position="539"/>
        <end position="559"/>
    </location>
</feature>
<feature type="zinc finger region" description="NR C4-type" evidence="4">
    <location>
        <begin position="575"/>
        <end position="599"/>
    </location>
</feature>
<feature type="region of interest" description="Interaction with ZNF318" evidence="9">
    <location>
        <begin position="1"/>
        <end position="566"/>
    </location>
</feature>
<feature type="region of interest" description="Modulating" evidence="1">
    <location>
        <begin position="1"/>
        <end position="537"/>
    </location>
</feature>
<feature type="region of interest" description="Disordered" evidence="6">
    <location>
        <begin position="35"/>
        <end position="146"/>
    </location>
</feature>
<feature type="region of interest" description="Disordered" evidence="6">
    <location>
        <begin position="175"/>
        <end position="222"/>
    </location>
</feature>
<feature type="region of interest" description="Disordered" evidence="6">
    <location>
        <begin position="436"/>
        <end position="471"/>
    </location>
</feature>
<feature type="region of interest" description="Interaction with LPXN" evidence="2">
    <location>
        <begin position="531"/>
        <end position="898"/>
    </location>
</feature>
<feature type="region of interest" description="Interaction with HIPK3" evidence="3">
    <location>
        <begin position="551"/>
        <end position="641"/>
    </location>
</feature>
<feature type="region of interest" description="Interaction with CCAR1" evidence="2">
    <location>
        <begin position="571"/>
        <end position="898"/>
    </location>
</feature>
<feature type="region of interest" description="Interaction with KAT7" evidence="2">
    <location>
        <begin position="604"/>
        <end position="898"/>
    </location>
</feature>
<feature type="compositionally biased region" description="Low complexity" evidence="6">
    <location>
        <begin position="94"/>
        <end position="103"/>
    </location>
</feature>
<feature type="compositionally biased region" description="Low complexity" evidence="6">
    <location>
        <begin position="175"/>
        <end position="193"/>
    </location>
</feature>
<feature type="compositionally biased region" description="Polar residues" evidence="6">
    <location>
        <begin position="210"/>
        <end position="222"/>
    </location>
</feature>
<feature type="binding site" evidence="12 17">
    <location>
        <position position="685"/>
    </location>
    <ligand>
        <name>17beta-hydroxy-5alpha-androstan-3-one</name>
        <dbReference type="ChEBI" id="CHEBI:16330"/>
    </ligand>
</feature>
<feature type="binding site" evidence="12 17">
    <location>
        <position position="732"/>
    </location>
    <ligand>
        <name>17beta-hydroxy-5alpha-androstan-3-one</name>
        <dbReference type="ChEBI" id="CHEBI:16330"/>
    </ligand>
</feature>
<feature type="binding site" evidence="12 17">
    <location>
        <position position="857"/>
    </location>
    <ligand>
        <name>17beta-hydroxy-5alpha-androstan-3-one</name>
        <dbReference type="ChEBI" id="CHEBI:16330"/>
    </ligand>
</feature>
<feature type="site" description="Interaction with coactivator LXXL and FXXFY motifs" evidence="2">
    <location>
        <position position="700"/>
    </location>
</feature>
<feature type="site" description="Interaction with coactivator FXXLF and FXXFY motifs" evidence="2">
    <location>
        <position position="877"/>
    </location>
</feature>
<feature type="modified residue" description="Phosphoserine; by CDK9" evidence="2">
    <location>
        <position position="61"/>
    </location>
</feature>
<feature type="modified residue" description="Phosphoserine" evidence="2">
    <location>
        <position position="75"/>
    </location>
</feature>
<feature type="modified residue" description="Phosphotyrosine; by CSK" evidence="2">
    <location>
        <position position="218"/>
    </location>
</feature>
<feature type="modified residue" description="Phosphoserine" evidence="2">
    <location>
        <position position="251"/>
    </location>
</feature>
<feature type="modified residue" description="Phosphotyrosine; by CSK and TNK2" evidence="2">
    <location>
        <position position="262"/>
    </location>
</feature>
<feature type="modified residue" description="Phosphotyrosine; by CSK" evidence="2">
    <location>
        <position position="302"/>
    </location>
</feature>
<feature type="modified residue" description="Phosphotyrosine; by CSK" evidence="2">
    <location>
        <position position="341"/>
    </location>
</feature>
<feature type="modified residue" description="Phosphotyrosine; by CSK" evidence="2">
    <location>
        <position position="352"/>
    </location>
</feature>
<feature type="modified residue" description="Phosphotyrosine; by CSK" evidence="2">
    <location>
        <position position="357"/>
    </location>
</feature>
<feature type="modified residue" description="Phosphotyrosine; by CSK and TNK2" evidence="2">
    <location>
        <position position="358"/>
    </location>
</feature>
<feature type="modified residue" description="Phosphotyrosine; by CSK" evidence="2">
    <location>
        <position position="388"/>
    </location>
</feature>
<feature type="modified residue" description="Phosphotyrosine; by CSK" evidence="2">
    <location>
        <position position="514"/>
    </location>
</feature>
<feature type="modified residue" description="Phosphotyrosine; by CSK" evidence="2">
    <location>
        <position position="531"/>
    </location>
</feature>
<feature type="modified residue" description="Phosphoserine" evidence="18">
    <location>
        <position position="630"/>
    </location>
</feature>
<feature type="modified residue" description="Phosphotyrosine; by CSK" evidence="2">
    <location>
        <position position="895"/>
    </location>
</feature>
<feature type="cross-link" description="Glycyl lysine isopeptide (Lys-Gly) (interchain with G-Cter in SUMO)" evidence="1">
    <location>
        <position position="381"/>
    </location>
</feature>
<feature type="cross-link" description="Glycyl lysine isopeptide (Lys-Gly) (interchain with G-Cter in SUMO)" evidence="1">
    <location>
        <position position="500"/>
    </location>
</feature>
<feature type="cross-link" description="Glycyl lysine isopeptide (Lys-Gly) (interchain with G-Cter in ubiquitin)" evidence="2">
    <location>
        <position position="825"/>
    </location>
</feature>
<feature type="cross-link" description="Glycyl lysine isopeptide (Lys-Gly) (interchain with G-Cter in ubiquitin)" evidence="2">
    <location>
        <position position="827"/>
    </location>
</feature>
<feature type="helix" evidence="19">
    <location>
        <begin position="652"/>
        <end position="659"/>
    </location>
</feature>
<feature type="helix" evidence="19">
    <location>
        <begin position="677"/>
        <end position="701"/>
    </location>
</feature>
<feature type="helix" evidence="19">
    <location>
        <begin position="705"/>
        <end position="707"/>
    </location>
</feature>
<feature type="helix" evidence="19">
    <location>
        <begin position="710"/>
        <end position="736"/>
    </location>
</feature>
<feature type="strand" evidence="19">
    <location>
        <begin position="740"/>
        <end position="745"/>
    </location>
</feature>
<feature type="strand" evidence="19">
    <location>
        <begin position="748"/>
        <end position="750"/>
    </location>
</feature>
<feature type="helix" evidence="19">
    <location>
        <begin position="752"/>
        <end position="757"/>
    </location>
</feature>
<feature type="helix" evidence="19">
    <location>
        <begin position="761"/>
        <end position="776"/>
    </location>
</feature>
<feature type="helix" evidence="19">
    <location>
        <begin position="781"/>
        <end position="792"/>
    </location>
</feature>
<feature type="strand" evidence="19">
    <location>
        <begin position="794"/>
        <end position="799"/>
    </location>
</feature>
<feature type="helix" evidence="19">
    <location>
        <begin position="804"/>
        <end position="823"/>
    </location>
</feature>
<feature type="helix" evidence="19">
    <location>
        <begin position="831"/>
        <end position="844"/>
    </location>
</feature>
<feature type="helix" evidence="19">
    <location>
        <begin position="846"/>
        <end position="862"/>
    </location>
</feature>
<feature type="turn" evidence="19">
    <location>
        <begin position="863"/>
        <end position="868"/>
    </location>
</feature>
<feature type="helix" evidence="19">
    <location>
        <begin position="873"/>
        <end position="887"/>
    </location>
</feature>
<feature type="strand" evidence="19">
    <location>
        <begin position="890"/>
        <end position="893"/>
    </location>
</feature>
<proteinExistence type="evidence at protein level"/>
<dbReference type="EMBL" id="S56585">
    <property type="protein sequence ID" value="AAB19916.1"/>
    <property type="molecule type" value="mRNA"/>
</dbReference>
<dbReference type="EMBL" id="X53779">
    <property type="protein sequence ID" value="CAA37795.1"/>
    <property type="molecule type" value="mRNA"/>
</dbReference>
<dbReference type="EMBL" id="M37890">
    <property type="protein sequence ID" value="AAA37234.1"/>
    <property type="molecule type" value="mRNA"/>
</dbReference>
<dbReference type="EMBL" id="X59592">
    <property type="protein sequence ID" value="CAA42160.1"/>
    <property type="molecule type" value="mRNA"/>
</dbReference>
<dbReference type="CCDS" id="CCDS30294.1"/>
<dbReference type="PIR" id="A35895">
    <property type="entry name" value="A35895"/>
</dbReference>
<dbReference type="RefSeq" id="NP_038504.1">
    <property type="nucleotide sequence ID" value="NM_013476.4"/>
</dbReference>
<dbReference type="PDB" id="2QPY">
    <property type="method" value="X-ray"/>
    <property type="resolution" value="2.50 A"/>
    <property type="chains" value="A=649-899"/>
</dbReference>
<dbReference type="PDBsum" id="2QPY"/>
<dbReference type="EMDB" id="EMD-25132"/>
<dbReference type="EMDB" id="EMD-25133"/>
<dbReference type="EMDB" id="EMD-25134"/>
<dbReference type="SMR" id="P19091"/>
<dbReference type="BioGRID" id="198179">
    <property type="interactions" value="28"/>
</dbReference>
<dbReference type="CORUM" id="P19091"/>
<dbReference type="DIP" id="DIP-41803N"/>
<dbReference type="FunCoup" id="P19091">
    <property type="interactions" value="786"/>
</dbReference>
<dbReference type="IntAct" id="P19091">
    <property type="interactions" value="10"/>
</dbReference>
<dbReference type="MINT" id="P19091"/>
<dbReference type="STRING" id="10090.ENSMUSP00000052648"/>
<dbReference type="BindingDB" id="P19091"/>
<dbReference type="ChEMBL" id="CHEMBL3056"/>
<dbReference type="DrugCentral" id="P19091"/>
<dbReference type="GlyGen" id="P19091">
    <property type="glycosylation" value="1 site"/>
</dbReference>
<dbReference type="iPTMnet" id="P19091"/>
<dbReference type="PhosphoSitePlus" id="P19091"/>
<dbReference type="SwissPalm" id="P19091"/>
<dbReference type="PaxDb" id="10090-ENSMUSP00000052648"/>
<dbReference type="ProteomicsDB" id="281823"/>
<dbReference type="Antibodypedia" id="3489">
    <property type="antibodies" value="2585 antibodies from 51 providers"/>
</dbReference>
<dbReference type="DNASU" id="11835"/>
<dbReference type="Ensembl" id="ENSMUST00000052837.9">
    <property type="protein sequence ID" value="ENSMUSP00000052648.8"/>
    <property type="gene ID" value="ENSMUSG00000046532.9"/>
</dbReference>
<dbReference type="GeneID" id="11835"/>
<dbReference type="KEGG" id="mmu:11835"/>
<dbReference type="UCSC" id="uc009tuv.1">
    <property type="organism name" value="mouse"/>
</dbReference>
<dbReference type="AGR" id="MGI:88064"/>
<dbReference type="CTD" id="367"/>
<dbReference type="MGI" id="MGI:88064">
    <property type="gene designation" value="Ar"/>
</dbReference>
<dbReference type="VEuPathDB" id="HostDB:ENSMUSG00000046532"/>
<dbReference type="eggNOG" id="KOG3575">
    <property type="taxonomic scope" value="Eukaryota"/>
</dbReference>
<dbReference type="GeneTree" id="ENSGT00940000155516"/>
<dbReference type="HOGENOM" id="CLU_016847_0_0_1"/>
<dbReference type="InParanoid" id="P19091"/>
<dbReference type="OMA" id="SHMEGYE"/>
<dbReference type="OrthoDB" id="10032732at2759"/>
<dbReference type="PhylomeDB" id="P19091"/>
<dbReference type="TreeFam" id="TF350286"/>
<dbReference type="Reactome" id="R-MMU-3371497">
    <property type="pathway name" value="HSP90 chaperone cycle for steroid hormone receptors (SHR) in the presence of ligand"/>
</dbReference>
<dbReference type="Reactome" id="R-MMU-383280">
    <property type="pathway name" value="Nuclear Receptor transcription pathway"/>
</dbReference>
<dbReference type="Reactome" id="R-MMU-4090294">
    <property type="pathway name" value="SUMOylation of intracellular receptors"/>
</dbReference>
<dbReference type="Reactome" id="R-MMU-5625886">
    <property type="pathway name" value="Activated PKN1 stimulates transcription of AR (androgen receptor) regulated genes KLK2 and KLK3"/>
</dbReference>
<dbReference type="Reactome" id="R-MMU-5689880">
    <property type="pathway name" value="Ub-specific processing proteases"/>
</dbReference>
<dbReference type="Reactome" id="R-MMU-8940973">
    <property type="pathway name" value="RUNX2 regulates osteoblast differentiation"/>
</dbReference>
<dbReference type="BioGRID-ORCS" id="11835">
    <property type="hits" value="2 hits in 84 CRISPR screens"/>
</dbReference>
<dbReference type="ChiTaRS" id="Ar">
    <property type="organism name" value="mouse"/>
</dbReference>
<dbReference type="EvolutionaryTrace" id="P19091"/>
<dbReference type="PRO" id="PR:P19091"/>
<dbReference type="Proteomes" id="UP000000589">
    <property type="component" value="Chromosome X"/>
</dbReference>
<dbReference type="RNAct" id="P19091">
    <property type="molecule type" value="protein"/>
</dbReference>
<dbReference type="Bgee" id="ENSMUSG00000046532">
    <property type="expression patterns" value="Expressed in lacrimal gland and 173 other cell types or tissues"/>
</dbReference>
<dbReference type="GO" id="GO:0000785">
    <property type="term" value="C:chromatin"/>
    <property type="evidence" value="ECO:0000250"/>
    <property type="project" value="UniProtKB"/>
</dbReference>
<dbReference type="GO" id="GO:0005737">
    <property type="term" value="C:cytoplasm"/>
    <property type="evidence" value="ECO:0000314"/>
    <property type="project" value="CAFA"/>
</dbReference>
<dbReference type="GO" id="GO:0005829">
    <property type="term" value="C:cytosol"/>
    <property type="evidence" value="ECO:0007669"/>
    <property type="project" value="Ensembl"/>
</dbReference>
<dbReference type="GO" id="GO:0016607">
    <property type="term" value="C:nuclear speck"/>
    <property type="evidence" value="ECO:0007669"/>
    <property type="project" value="Ensembl"/>
</dbReference>
<dbReference type="GO" id="GO:0005634">
    <property type="term" value="C:nucleus"/>
    <property type="evidence" value="ECO:0000314"/>
    <property type="project" value="CAFA"/>
</dbReference>
<dbReference type="GO" id="GO:0005886">
    <property type="term" value="C:plasma membrane"/>
    <property type="evidence" value="ECO:0000314"/>
    <property type="project" value="MGI"/>
</dbReference>
<dbReference type="GO" id="GO:0032991">
    <property type="term" value="C:protein-containing complex"/>
    <property type="evidence" value="ECO:0000266"/>
    <property type="project" value="MGI"/>
</dbReference>
<dbReference type="GO" id="GO:0005497">
    <property type="term" value="F:androgen binding"/>
    <property type="evidence" value="ECO:0000250"/>
    <property type="project" value="UniProtKB"/>
</dbReference>
<dbReference type="GO" id="GO:0051117">
    <property type="term" value="F:ATPase binding"/>
    <property type="evidence" value="ECO:0000266"/>
    <property type="project" value="MGI"/>
</dbReference>
<dbReference type="GO" id="GO:0008013">
    <property type="term" value="F:beta-catenin binding"/>
    <property type="evidence" value="ECO:0000250"/>
    <property type="project" value="UniProtKB"/>
</dbReference>
<dbReference type="GO" id="GO:0003682">
    <property type="term" value="F:chromatin binding"/>
    <property type="evidence" value="ECO:0007669"/>
    <property type="project" value="Ensembl"/>
</dbReference>
<dbReference type="GO" id="GO:0001228">
    <property type="term" value="F:DNA-binding transcription activator activity, RNA polymerase II-specific"/>
    <property type="evidence" value="ECO:0007669"/>
    <property type="project" value="Ensembl"/>
</dbReference>
<dbReference type="GO" id="GO:0003700">
    <property type="term" value="F:DNA-binding transcription factor activity"/>
    <property type="evidence" value="ECO:0000314"/>
    <property type="project" value="MGI"/>
</dbReference>
<dbReference type="GO" id="GO:0019899">
    <property type="term" value="F:enzyme binding"/>
    <property type="evidence" value="ECO:0000353"/>
    <property type="project" value="BHF-UCL"/>
</dbReference>
<dbReference type="GO" id="GO:0140693">
    <property type="term" value="F:molecular condensate scaffold activity"/>
    <property type="evidence" value="ECO:0007669"/>
    <property type="project" value="Ensembl"/>
</dbReference>
<dbReference type="GO" id="GO:0004879">
    <property type="term" value="F:nuclear receptor activity"/>
    <property type="evidence" value="ECO:0000314"/>
    <property type="project" value="CAFA"/>
</dbReference>
<dbReference type="GO" id="GO:0003707">
    <property type="term" value="F:nuclear steroid receptor activity"/>
    <property type="evidence" value="ECO:0007669"/>
    <property type="project" value="Ensembl"/>
</dbReference>
<dbReference type="GO" id="GO:0070974">
    <property type="term" value="F:POU domain binding"/>
    <property type="evidence" value="ECO:0000314"/>
    <property type="project" value="UniProtKB"/>
</dbReference>
<dbReference type="GO" id="GO:0000978">
    <property type="term" value="F:RNA polymerase II cis-regulatory region sequence-specific DNA binding"/>
    <property type="evidence" value="ECO:0007669"/>
    <property type="project" value="Ensembl"/>
</dbReference>
<dbReference type="GO" id="GO:0000979">
    <property type="term" value="F:RNA polymerase II core promoter sequence-specific DNA binding"/>
    <property type="evidence" value="ECO:0000314"/>
    <property type="project" value="MGI"/>
</dbReference>
<dbReference type="GO" id="GO:0001091">
    <property type="term" value="F:RNA polymerase II general transcription initiation factor binding"/>
    <property type="evidence" value="ECO:0007669"/>
    <property type="project" value="Ensembl"/>
</dbReference>
<dbReference type="GO" id="GO:0061629">
    <property type="term" value="F:RNA polymerase II-specific DNA-binding transcription factor binding"/>
    <property type="evidence" value="ECO:0007669"/>
    <property type="project" value="Ensembl"/>
</dbReference>
<dbReference type="GO" id="GO:0043565">
    <property type="term" value="F:sequence-specific DNA binding"/>
    <property type="evidence" value="ECO:0000314"/>
    <property type="project" value="MGI"/>
</dbReference>
<dbReference type="GO" id="GO:0005102">
    <property type="term" value="F:signaling receptor binding"/>
    <property type="evidence" value="ECO:0007669"/>
    <property type="project" value="Ensembl"/>
</dbReference>
<dbReference type="GO" id="GO:0005496">
    <property type="term" value="F:steroid binding"/>
    <property type="evidence" value="ECO:0007669"/>
    <property type="project" value="UniProtKB-KW"/>
</dbReference>
<dbReference type="GO" id="GO:0000976">
    <property type="term" value="F:transcription cis-regulatory region binding"/>
    <property type="evidence" value="ECO:0000250"/>
    <property type="project" value="UniProtKB"/>
</dbReference>
<dbReference type="GO" id="GO:0001223">
    <property type="term" value="F:transcription coactivator binding"/>
    <property type="evidence" value="ECO:0007669"/>
    <property type="project" value="Ensembl"/>
</dbReference>
<dbReference type="GO" id="GO:0008270">
    <property type="term" value="F:zinc ion binding"/>
    <property type="evidence" value="ECO:0007669"/>
    <property type="project" value="UniProtKB-KW"/>
</dbReference>
<dbReference type="GO" id="GO:0030521">
    <property type="term" value="P:androgen receptor signaling pathway"/>
    <property type="evidence" value="ECO:0000314"/>
    <property type="project" value="CAFA"/>
</dbReference>
<dbReference type="GO" id="GO:0048645">
    <property type="term" value="P:animal organ formation"/>
    <property type="evidence" value="ECO:0000315"/>
    <property type="project" value="MGI"/>
</dbReference>
<dbReference type="GO" id="GO:0071391">
    <property type="term" value="P:cellular response to estrogen stimulus"/>
    <property type="evidence" value="ECO:0007669"/>
    <property type="project" value="Ensembl"/>
</dbReference>
<dbReference type="GO" id="GO:0071394">
    <property type="term" value="P:cellular response to testosterone stimulus"/>
    <property type="evidence" value="ECO:0000314"/>
    <property type="project" value="CAFA"/>
</dbReference>
<dbReference type="GO" id="GO:0060742">
    <property type="term" value="P:epithelial cell differentiation involved in prostate gland development"/>
    <property type="evidence" value="ECO:0000315"/>
    <property type="project" value="MGI"/>
</dbReference>
<dbReference type="GO" id="GO:0003382">
    <property type="term" value="P:epithelial cell morphogenesis"/>
    <property type="evidence" value="ECO:0000316"/>
    <property type="project" value="MGI"/>
</dbReference>
<dbReference type="GO" id="GO:0050673">
    <property type="term" value="P:epithelial cell proliferation"/>
    <property type="evidence" value="ECO:0000315"/>
    <property type="project" value="MGI"/>
</dbReference>
<dbReference type="GO" id="GO:0030520">
    <property type="term" value="P:estrogen receptor signaling pathway"/>
    <property type="evidence" value="ECO:0000315"/>
    <property type="project" value="MGI"/>
</dbReference>
<dbReference type="GO" id="GO:0009566">
    <property type="term" value="P:fertilization"/>
    <property type="evidence" value="ECO:0000315"/>
    <property type="project" value="MGI"/>
</dbReference>
<dbReference type="GO" id="GO:0010467">
    <property type="term" value="P:gene expression"/>
    <property type="evidence" value="ECO:0000315"/>
    <property type="project" value="MGI"/>
</dbReference>
<dbReference type="GO" id="GO:0001701">
    <property type="term" value="P:in utero embryonic development"/>
    <property type="evidence" value="ECO:0000315"/>
    <property type="project" value="MGI"/>
</dbReference>
<dbReference type="GO" id="GO:0048009">
    <property type="term" value="P:insulin-like growth factor receptor signaling pathway"/>
    <property type="evidence" value="ECO:0000315"/>
    <property type="project" value="MGI"/>
</dbReference>
<dbReference type="GO" id="GO:0030522">
    <property type="term" value="P:intracellular receptor signaling pathway"/>
    <property type="evidence" value="ECO:0000250"/>
    <property type="project" value="UniProtKB"/>
</dbReference>
<dbReference type="GO" id="GO:0060599">
    <property type="term" value="P:lateral sprouting involved in mammary gland duct morphogenesis"/>
    <property type="evidence" value="ECO:0000315"/>
    <property type="project" value="MGI"/>
</dbReference>
<dbReference type="GO" id="GO:0033327">
    <property type="term" value="P:Leydig cell differentiation"/>
    <property type="evidence" value="ECO:0000315"/>
    <property type="project" value="MGI"/>
</dbReference>
<dbReference type="GO" id="GO:0048808">
    <property type="term" value="P:male genitalia morphogenesis"/>
    <property type="evidence" value="ECO:0000315"/>
    <property type="project" value="MGI"/>
</dbReference>
<dbReference type="GO" id="GO:0008584">
    <property type="term" value="P:male gonad development"/>
    <property type="evidence" value="ECO:0000315"/>
    <property type="project" value="MGI"/>
</dbReference>
<dbReference type="GO" id="GO:0019102">
    <property type="term" value="P:male somatic sex determination"/>
    <property type="evidence" value="ECO:0000315"/>
    <property type="project" value="MGI"/>
</dbReference>
<dbReference type="GO" id="GO:0060749">
    <property type="term" value="P:mammary gland alveolus development"/>
    <property type="evidence" value="ECO:0000315"/>
    <property type="project" value="MGI"/>
</dbReference>
<dbReference type="GO" id="GO:0000165">
    <property type="term" value="P:MAPK cascade"/>
    <property type="evidence" value="ECO:0000315"/>
    <property type="project" value="MGI"/>
</dbReference>
<dbReference type="GO" id="GO:0140694">
    <property type="term" value="P:membraneless organelle assembly"/>
    <property type="evidence" value="ECO:0007669"/>
    <property type="project" value="Ensembl"/>
</dbReference>
<dbReference type="GO" id="GO:0060571">
    <property type="term" value="P:morphogenesis of an epithelial fold"/>
    <property type="evidence" value="ECO:0000315"/>
    <property type="project" value="MGI"/>
</dbReference>
<dbReference type="GO" id="GO:0035264">
    <property type="term" value="P:multicellular organism growth"/>
    <property type="evidence" value="ECO:0000316"/>
    <property type="project" value="MGI"/>
</dbReference>
<dbReference type="GO" id="GO:0050680">
    <property type="term" value="P:negative regulation of epithelial cell proliferation"/>
    <property type="evidence" value="ECO:0000315"/>
    <property type="project" value="MGI"/>
</dbReference>
<dbReference type="GO" id="GO:2001237">
    <property type="term" value="P:negative regulation of extrinsic apoptotic signaling pathway"/>
    <property type="evidence" value="ECO:0000250"/>
    <property type="project" value="UniProtKB"/>
</dbReference>
<dbReference type="GO" id="GO:0045720">
    <property type="term" value="P:negative regulation of integrin biosynthetic process"/>
    <property type="evidence" value="ECO:0007669"/>
    <property type="project" value="Ensembl"/>
</dbReference>
<dbReference type="GO" id="GO:0000122">
    <property type="term" value="P:negative regulation of transcription by RNA polymerase II"/>
    <property type="evidence" value="ECO:0007669"/>
    <property type="project" value="Ensembl"/>
</dbReference>
<dbReference type="GO" id="GO:0045597">
    <property type="term" value="P:positive regulation of cell differentiation"/>
    <property type="evidence" value="ECO:0007669"/>
    <property type="project" value="Ensembl"/>
</dbReference>
<dbReference type="GO" id="GO:0008284">
    <property type="term" value="P:positive regulation of cell population proliferation"/>
    <property type="evidence" value="ECO:0000250"/>
    <property type="project" value="UniProtKB"/>
</dbReference>
<dbReference type="GO" id="GO:0060769">
    <property type="term" value="P:positive regulation of epithelial cell proliferation involved in prostate gland development"/>
    <property type="evidence" value="ECO:0000314"/>
    <property type="project" value="MGI"/>
</dbReference>
<dbReference type="GO" id="GO:0010628">
    <property type="term" value="P:positive regulation of gene expression"/>
    <property type="evidence" value="ECO:0007669"/>
    <property type="project" value="Ensembl"/>
</dbReference>
<dbReference type="GO" id="GO:0043568">
    <property type="term" value="P:positive regulation of insulin-like growth factor receptor signaling pathway"/>
    <property type="evidence" value="ECO:0000315"/>
    <property type="project" value="MGI"/>
</dbReference>
<dbReference type="GO" id="GO:0045726">
    <property type="term" value="P:positive regulation of integrin biosynthetic process"/>
    <property type="evidence" value="ECO:0007669"/>
    <property type="project" value="Ensembl"/>
</dbReference>
<dbReference type="GO" id="GO:0033148">
    <property type="term" value="P:positive regulation of intracellular estrogen receptor signaling pathway"/>
    <property type="evidence" value="ECO:0000315"/>
    <property type="project" value="MGI"/>
</dbReference>
<dbReference type="GO" id="GO:0043410">
    <property type="term" value="P:positive regulation of MAPK cascade"/>
    <property type="evidence" value="ECO:0000315"/>
    <property type="project" value="MGI"/>
</dbReference>
<dbReference type="GO" id="GO:1902895">
    <property type="term" value="P:positive regulation of miRNA transcription"/>
    <property type="evidence" value="ECO:0007669"/>
    <property type="project" value="Ensembl"/>
</dbReference>
<dbReference type="GO" id="GO:0042327">
    <property type="term" value="P:positive regulation of phosphorylation"/>
    <property type="evidence" value="ECO:0007669"/>
    <property type="project" value="Ensembl"/>
</dbReference>
<dbReference type="GO" id="GO:0045944">
    <property type="term" value="P:positive regulation of transcription by RNA polymerase II"/>
    <property type="evidence" value="ECO:0000314"/>
    <property type="project" value="MGI"/>
</dbReference>
<dbReference type="GO" id="GO:0045945">
    <property type="term" value="P:positive regulation of transcription by RNA polymerase III"/>
    <property type="evidence" value="ECO:0007669"/>
    <property type="project" value="Ensembl"/>
</dbReference>
<dbReference type="GO" id="GO:0060740">
    <property type="term" value="P:prostate gland epithelium morphogenesis"/>
    <property type="evidence" value="ECO:0000315"/>
    <property type="project" value="MGI"/>
</dbReference>
<dbReference type="GO" id="GO:0060736">
    <property type="term" value="P:prostate gland growth"/>
    <property type="evidence" value="ECO:0000315"/>
    <property type="project" value="MGI"/>
</dbReference>
<dbReference type="GO" id="GO:0060514">
    <property type="term" value="P:prostate induction"/>
    <property type="evidence" value="ECO:0000315"/>
    <property type="project" value="MGI"/>
</dbReference>
<dbReference type="GO" id="GO:0048638">
    <property type="term" value="P:regulation of developmental growth"/>
    <property type="evidence" value="ECO:0000315"/>
    <property type="project" value="MGI"/>
</dbReference>
<dbReference type="GO" id="GO:0006355">
    <property type="term" value="P:regulation of DNA-templated transcription"/>
    <property type="evidence" value="ECO:0000314"/>
    <property type="project" value="MGI"/>
</dbReference>
<dbReference type="GO" id="GO:0010468">
    <property type="term" value="P:regulation of gene expression"/>
    <property type="evidence" value="ECO:0000315"/>
    <property type="project" value="MGI"/>
</dbReference>
<dbReference type="GO" id="GO:0060685">
    <property type="term" value="P:regulation of prostatic bud formation"/>
    <property type="evidence" value="ECO:0000316"/>
    <property type="project" value="MGI"/>
</dbReference>
<dbReference type="GO" id="GO:1903076">
    <property type="term" value="P:regulation of protein localization to plasma membrane"/>
    <property type="evidence" value="ECO:0000250"/>
    <property type="project" value="UniProtKB"/>
</dbReference>
<dbReference type="GO" id="GO:0003073">
    <property type="term" value="P:regulation of systemic arterial blood pressure"/>
    <property type="evidence" value="ECO:0000316"/>
    <property type="project" value="MGI"/>
</dbReference>
<dbReference type="GO" id="GO:0006357">
    <property type="term" value="P:regulation of transcription by RNA polymerase II"/>
    <property type="evidence" value="ECO:0000315"/>
    <property type="project" value="MGI"/>
</dbReference>
<dbReference type="GO" id="GO:0048608">
    <property type="term" value="P:reproductive structure development"/>
    <property type="evidence" value="ECO:0000315"/>
    <property type="project" value="MGI"/>
</dbReference>
<dbReference type="GO" id="GO:0061458">
    <property type="term" value="P:reproductive system development"/>
    <property type="evidence" value="ECO:0000316"/>
    <property type="project" value="MGI"/>
</dbReference>
<dbReference type="GO" id="GO:0072520">
    <property type="term" value="P:seminiferous tubule development"/>
    <property type="evidence" value="ECO:0000315"/>
    <property type="project" value="MGI"/>
</dbReference>
<dbReference type="GO" id="GO:0007338">
    <property type="term" value="P:single fertilization"/>
    <property type="evidence" value="ECO:0000316"/>
    <property type="project" value="MGI"/>
</dbReference>
<dbReference type="GO" id="GO:0007283">
    <property type="term" value="P:spermatogenesis"/>
    <property type="evidence" value="ECO:0000315"/>
    <property type="project" value="MGI"/>
</dbReference>
<dbReference type="GO" id="GO:0060748">
    <property type="term" value="P:tertiary branching involved in mammary gland duct morphogenesis"/>
    <property type="evidence" value="ECO:0000315"/>
    <property type="project" value="MGI"/>
</dbReference>
<dbReference type="GO" id="GO:0006366">
    <property type="term" value="P:transcription by RNA polymerase II"/>
    <property type="evidence" value="ECO:0000314"/>
    <property type="project" value="MGI"/>
</dbReference>
<dbReference type="CDD" id="cd07173">
    <property type="entry name" value="NR_DBD_AR"/>
    <property type="match status" value="1"/>
</dbReference>
<dbReference type="CDD" id="cd07073">
    <property type="entry name" value="NR_LBD_AR"/>
    <property type="match status" value="1"/>
</dbReference>
<dbReference type="FunFam" id="3.30.50.10:FF:000024">
    <property type="entry name" value="Androgen receptor"/>
    <property type="match status" value="1"/>
</dbReference>
<dbReference type="FunFam" id="1.10.565.10:FF:000004">
    <property type="entry name" value="Androgen receptor variant"/>
    <property type="match status" value="1"/>
</dbReference>
<dbReference type="Gene3D" id="3.30.50.10">
    <property type="entry name" value="Erythroid Transcription Factor GATA-1, subunit A"/>
    <property type="match status" value="1"/>
</dbReference>
<dbReference type="Gene3D" id="1.10.565.10">
    <property type="entry name" value="Retinoid X Receptor"/>
    <property type="match status" value="1"/>
</dbReference>
<dbReference type="InterPro" id="IPR001103">
    <property type="entry name" value="Andrgn_rcpt"/>
</dbReference>
<dbReference type="InterPro" id="IPR035500">
    <property type="entry name" value="NHR-like_dom_sf"/>
</dbReference>
<dbReference type="InterPro" id="IPR000536">
    <property type="entry name" value="Nucl_hrmn_rcpt_lig-bd"/>
</dbReference>
<dbReference type="InterPro" id="IPR050200">
    <property type="entry name" value="Nuclear_hormone_rcpt_NR3"/>
</dbReference>
<dbReference type="InterPro" id="IPR001628">
    <property type="entry name" value="Znf_hrmn_rcpt"/>
</dbReference>
<dbReference type="InterPro" id="IPR013088">
    <property type="entry name" value="Znf_NHR/GATA"/>
</dbReference>
<dbReference type="PANTHER" id="PTHR48092">
    <property type="entry name" value="KNIRPS-RELATED PROTEIN-RELATED"/>
    <property type="match status" value="1"/>
</dbReference>
<dbReference type="Pfam" id="PF02166">
    <property type="entry name" value="Androgen_recep"/>
    <property type="match status" value="1"/>
</dbReference>
<dbReference type="Pfam" id="PF00104">
    <property type="entry name" value="Hormone_recep"/>
    <property type="match status" value="1"/>
</dbReference>
<dbReference type="Pfam" id="PF00105">
    <property type="entry name" value="zf-C4"/>
    <property type="match status" value="1"/>
</dbReference>
<dbReference type="PRINTS" id="PR00521">
    <property type="entry name" value="ANDROGENR"/>
</dbReference>
<dbReference type="PRINTS" id="PR00047">
    <property type="entry name" value="STROIDFINGER"/>
</dbReference>
<dbReference type="SMART" id="SM00430">
    <property type="entry name" value="HOLI"/>
    <property type="match status" value="1"/>
</dbReference>
<dbReference type="SMART" id="SM00399">
    <property type="entry name" value="ZnF_C4"/>
    <property type="match status" value="1"/>
</dbReference>
<dbReference type="SUPFAM" id="SSF57716">
    <property type="entry name" value="Glucocorticoid receptor-like (DNA-binding domain)"/>
    <property type="match status" value="1"/>
</dbReference>
<dbReference type="SUPFAM" id="SSF48508">
    <property type="entry name" value="Nuclear receptor ligand-binding domain"/>
    <property type="match status" value="1"/>
</dbReference>
<dbReference type="PROSITE" id="PS51843">
    <property type="entry name" value="NR_LBD"/>
    <property type="match status" value="1"/>
</dbReference>
<dbReference type="PROSITE" id="PS00031">
    <property type="entry name" value="NUCLEAR_REC_DBD_1"/>
    <property type="match status" value="1"/>
</dbReference>
<dbReference type="PROSITE" id="PS51030">
    <property type="entry name" value="NUCLEAR_REC_DBD_2"/>
    <property type="match status" value="1"/>
</dbReference>
<accession>P19091</accession>
<name>ANDR_MOUSE</name>
<reference key="1">
    <citation type="journal article" date="1990" name="Biochem. Biophys. Res. Commun.">
        <title>Molecular cloning of androgen receptors from divergent species with a polymerase chain reaction technique: complete cDNA sequence of the mouse androgen receptor and isolation of androgen receptor cDNA probes from dog, guinea pig and clawed frog.</title>
        <authorList>
            <person name="He W.W."/>
            <person name="Fischer L.M."/>
            <person name="Sun S."/>
            <person name="Bilhartz D.L."/>
            <person name="Zhu X."/>
            <person name="Young C.Y.F."/>
            <person name="Kelley D.B."/>
            <person name="Tindall D.J."/>
        </authorList>
    </citation>
    <scope>NUCLEOTIDE SEQUENCE [MRNA]</scope>
    <source>
        <strain>BALB/cJ</strain>
    </source>
</reference>
<reference key="2">
    <citation type="journal article" date="1990" name="Mol. Endocrinol.">
        <title>Structure and size distribution of the androgen receptor mRNA in wild-type and Tfm/Y mutant mice.</title>
        <authorList>
            <person name="Gaspar M.L."/>
            <person name="Meo T."/>
            <person name="Tosi M."/>
        </authorList>
    </citation>
    <scope>NUCLEOTIDE SEQUENCE [MRNA]</scope>
</reference>
<reference key="3">
    <citation type="journal article" date="1991" name="Biochem. J.">
        <title>The mouse androgen receptor. Functional analysis of the protein and characterization of the gene.</title>
        <authorList>
            <person name="Faber P.W."/>
            <person name="King A."/>
            <person name="van Rooij H.C.J."/>
            <person name="Brinkmann A.O."/>
            <person name="de Both N.J."/>
            <person name="Trapman J."/>
        </authorList>
    </citation>
    <scope>NUCLEOTIDE SEQUENCE [MRNA]</scope>
</reference>
<reference key="4">
    <citation type="journal article" date="1991" name="Mol. Endocrinol.">
        <title>A frameshift mutation destabilizes androgen receptor messenger RNA in the Tfm mouse.</title>
        <authorList>
            <person name="Charest N.J."/>
            <person name="Zhou Z."/>
            <person name="Lubahn D.B."/>
            <person name="Olsen K.L."/>
            <person name="Wilson E.M."/>
            <person name="French F.S."/>
        </authorList>
    </citation>
    <scope>NUCLEOTIDE SEQUENCE [MRNA]</scope>
</reference>
<reference key="5">
    <citation type="journal article" date="2002" name="Mol. Biol. Cell">
        <title>Novel ATPase of SNF2-like protein family interacts with androgen receptor and modulates androgen-dependent transcription.</title>
        <authorList>
            <person name="Rouleau N."/>
            <person name="Domans'kyi A."/>
            <person name="Reeben M."/>
            <person name="Moilanen A.-M."/>
            <person name="Havas K."/>
            <person name="Kang Z."/>
            <person name="Owen-Hughes T."/>
            <person name="Palvimo J.J."/>
            <person name="Jaenne O.A."/>
        </authorList>
    </citation>
    <scope>INTERACTION WITH RAD54L2</scope>
    <source>
        <strain>Swiss Webster</strain>
        <tissue>Embryo</tissue>
    </source>
</reference>
<reference key="6">
    <citation type="journal article" date="2004" name="Mol. Cell. Biol.">
        <title>Dyrk1A potentiates steroid hormone-induced transcription via the chromatin remodeling factor Arip4.</title>
        <authorList>
            <person name="Sitz J.H."/>
            <person name="Tigges M."/>
            <person name="Baumgaertel K."/>
            <person name="Khaspekov L.G."/>
            <person name="Lutz B."/>
        </authorList>
    </citation>
    <scope>INTERACTION WITH RAD54L2</scope>
</reference>
<reference key="7">
    <citation type="journal article" date="2005" name="Biochem. Biophys. Res. Commun.">
        <title>A zinc finger protein TZF is a novel corepressor of androgen receptor.</title>
        <authorList>
            <person name="Ishizuka M."/>
            <person name="Kawate H."/>
            <person name="Takayanagi R."/>
            <person name="Ohshima H."/>
            <person name="Tao R.-H."/>
            <person name="Hagiwara H."/>
        </authorList>
    </citation>
    <scope>INTERACTION WITH ZNF318</scope>
</reference>
<reference key="8">
    <citation type="journal article" date="2005" name="Mol. Cell. Biol.">
        <title>GAC63, a GRIP1-dependent nuclear receptor coactivator.</title>
        <authorList>
            <person name="Chen Y.-H."/>
            <person name="Kim J.H."/>
            <person name="Stallcup M.R."/>
        </authorList>
    </citation>
    <scope>INTERACTION WITH SLC30A9</scope>
</reference>
<reference key="9">
    <citation type="journal article" date="2006" name="Biochem. Biophys. Res. Commun.">
        <title>Opposite effects of alternative TZF spliced variants on androgen receptor.</title>
        <authorList>
            <person name="Tao R.H."/>
            <person name="Kawate H."/>
            <person name="Ohnaka K."/>
            <person name="Ishizuka M."/>
            <person name="Hagiwara H."/>
            <person name="Takayanagi R."/>
        </authorList>
    </citation>
    <scope>INTERACTION WITH ZNF318</scope>
</reference>
<reference key="10">
    <citation type="journal article" date="2010" name="Cell">
        <title>A tissue-specific atlas of mouse protein phosphorylation and expression.</title>
        <authorList>
            <person name="Huttlin E.L."/>
            <person name="Jedrychowski M.P."/>
            <person name="Elias J.E."/>
            <person name="Goswami T."/>
            <person name="Rad R."/>
            <person name="Beausoleil S.A."/>
            <person name="Villen J."/>
            <person name="Haas W."/>
            <person name="Sowa M.E."/>
            <person name="Gygi S.P."/>
        </authorList>
    </citation>
    <scope>PHOSPHORYLATION [LARGE SCALE ANALYSIS] AT SER-630</scope>
    <scope>IDENTIFICATION BY MASS SPECTROMETRY [LARGE SCALE ANALYSIS]</scope>
    <source>
        <tissue>Testis</tissue>
    </source>
</reference>
<reference key="11">
    <citation type="journal article" date="2011" name="Nature">
        <title>Cryptochromes mediate rhythmic repression of the glucocorticoid receptor.</title>
        <authorList>
            <person name="Lamia K.A."/>
            <person name="Papp S.J."/>
            <person name="Yu R.T."/>
            <person name="Barish G.D."/>
            <person name="Uhlenhaut N.H."/>
            <person name="Jonker J.W."/>
            <person name="Downes M."/>
            <person name="Evans R.M."/>
        </authorList>
    </citation>
    <scope>INTERACTION WITH CRY1</scope>
</reference>
<reference key="12">
    <citation type="journal article" date="2013" name="Proc. Natl. Acad. Sci. U.S.A.">
        <title>ARID4A and ARID4B regulate male fertility, a functional link to the AR and RB pathways.</title>
        <authorList>
            <person name="Wu R.C."/>
            <person name="Jiang M."/>
            <person name="Beaudet A.L."/>
            <person name="Wu M.Y."/>
        </authorList>
    </citation>
    <scope>INTERACTION WITH ARID4A AND ARID4B</scope>
</reference>
<reference key="13">
    <citation type="journal article" date="2017" name="Proc. Natl. Acad. Sci. U.S.A.">
        <title>Circadian repressors CRY1 and CRY2 broadly interact with nuclear receptors and modulate transcriptional activity.</title>
        <authorList>
            <person name="Kriebs A."/>
            <person name="Jordan S.D."/>
            <person name="Soto E."/>
            <person name="Henriksson E."/>
            <person name="Sandate C.R."/>
            <person name="Vaughan M.E."/>
            <person name="Chan A.B."/>
            <person name="Duglan D."/>
            <person name="Papp S.J."/>
            <person name="Huber A.L."/>
            <person name="Afetian M.E."/>
            <person name="Yu R.T."/>
            <person name="Zhao X."/>
            <person name="Downes M."/>
            <person name="Evans R.M."/>
            <person name="Lamia K.A."/>
        </authorList>
    </citation>
    <scope>INTERACTION WITH CRY1 AND CRY2</scope>
</reference>
<reference key="14">
    <citation type="journal article" date="2007" name="Proc. Natl. Acad. Sci. U.S.A.">
        <title>A surface on the androgen receptor that allosterically regulates coactivator binding.</title>
        <authorList>
            <person name="Estebanez-Perpina E."/>
            <person name="Arnold L.A."/>
            <person name="Nguyen P."/>
            <person name="Rodrigues E.D."/>
            <person name="Mar E."/>
            <person name="Bateman R."/>
            <person name="Pallai P."/>
            <person name="Shokat K.M."/>
            <person name="Baxter J.D."/>
            <person name="Guy R.K."/>
            <person name="Webb P."/>
            <person name="Fletterick R.J."/>
        </authorList>
    </citation>
    <scope>X-RAY CRYSTALLOGRAPHY (2.5 ANGSTROMS) OF 649-899 IN COMPLEX WITH NCOA2 AND DIHYDROTESTOSTERONE</scope>
</reference>
<organism>
    <name type="scientific">Mus musculus</name>
    <name type="common">Mouse</name>
    <dbReference type="NCBI Taxonomy" id="10090"/>
    <lineage>
        <taxon>Eukaryota</taxon>
        <taxon>Metazoa</taxon>
        <taxon>Chordata</taxon>
        <taxon>Craniata</taxon>
        <taxon>Vertebrata</taxon>
        <taxon>Euteleostomi</taxon>
        <taxon>Mammalia</taxon>
        <taxon>Eutheria</taxon>
        <taxon>Euarchontoglires</taxon>
        <taxon>Glires</taxon>
        <taxon>Rodentia</taxon>
        <taxon>Myomorpha</taxon>
        <taxon>Muroidea</taxon>
        <taxon>Muridae</taxon>
        <taxon>Murinae</taxon>
        <taxon>Mus</taxon>
        <taxon>Mus</taxon>
    </lineage>
</organism>
<protein>
    <recommendedName>
        <fullName>Androgen receptor</fullName>
    </recommendedName>
    <alternativeName>
        <fullName>Dihydrotestosterone receptor</fullName>
    </alternativeName>
    <alternativeName>
        <fullName>Nuclear receptor subfamily 3 group C member 4</fullName>
    </alternativeName>
</protein>
<keyword id="KW-0002">3D-structure</keyword>
<keyword id="KW-0963">Cytoplasm</keyword>
<keyword id="KW-0238">DNA-binding</keyword>
<keyword id="KW-1017">Isopeptide bond</keyword>
<keyword id="KW-0446">Lipid-binding</keyword>
<keyword id="KW-0449">Lipoprotein</keyword>
<keyword id="KW-0479">Metal-binding</keyword>
<keyword id="KW-0539">Nucleus</keyword>
<keyword id="KW-0564">Palmitate</keyword>
<keyword id="KW-0597">Phosphoprotein</keyword>
<keyword id="KW-0675">Receptor</keyword>
<keyword id="KW-1185">Reference proteome</keyword>
<keyword id="KW-0754">Steroid-binding</keyword>
<keyword id="KW-0804">Transcription</keyword>
<keyword id="KW-0805">Transcription regulation</keyword>
<keyword id="KW-0832">Ubl conjugation</keyword>
<keyword id="KW-0862">Zinc</keyword>
<keyword id="KW-0863">Zinc-finger</keyword>
<sequence>MEVQLGLGRVYPRPPSKTYRGAFQNLFQSVREAIQNPGPRHPEAANIAPPGACLQQRQETSPRRRRRQQHTEDGSPQAHIRGPTGYLALEEEQQPSQQQAASEGHPESSCLPEPGAATAPGKGLPQQPPAPPDQDDSAAPSTLSLLGPTFPGLSSCSADIKDILNEAGTMQLLQQQQQQQQHQQQHQQHQQQQEVISEGSSARAREATGAPSSSKDSYLGGNSTISDSAKELCKAVSVSMGLGVEALEHLSPGEQLRGDCMYASLLGGPPAVRPTPCAPLPECKGLPLDEGPGKSTEETAEYSSFKGGYAKGLEGESLGCSGSSEAGSSGTLEIPSSLSLYKSGALDEAAAYQNRDYYNFPLALSGPPHPPPPTHPHARIKLENPLDYGSAWAAAAAQCRYGDLGSLHGGSVAGPSTGSPPATTSSSWHTLFTAEEGQLYGPGGGGGSSSPSDAGPVAPYGYTRPPQGLTSQESDYSASEVWYPGGVVNRVPYPSPNCVKSEMGPWMENYSGPYGDMRLDSTRDHVLPIDYYFPPQKTCLICGDEASGCHYGALTCGSCKVFFKRAAEGKQKYLCASRNDCTIDKFRRKNCPSCRLRKCYEAGMTLGARKLKKLGNLKLQEEGENSNAGSPTEDPSQKMTVSHIEGYECQPIFLNVLEAIEPGVVCAGHDNNQPDSFAALLSSLNELGERQLVHVVKWAKALPGFRNLHVDDQMAVIQYSWMGLMVFAMGWRSFTNVNSRMLYFAPDLVFNEYRMHKSRMYSQCVRMRHLSQEFGWLQITPQEFLCMKALLLFSIIPVDGLKNQKFFDELRMNYIKELDRIIACKRKNPTSCSRRFYQLTKLLDSVQPIARELHQFTFDLLIKSHMVSVDFPEMMAEIISVQVPKILSGKVKPIYFHTQ</sequence>
<evidence type="ECO:0000250" key="1"/>
<evidence type="ECO:0000250" key="2">
    <source>
        <dbReference type="UniProtKB" id="P10275"/>
    </source>
</evidence>
<evidence type="ECO:0000250" key="3">
    <source>
        <dbReference type="UniProtKB" id="P15207"/>
    </source>
</evidence>
<evidence type="ECO:0000255" key="4">
    <source>
        <dbReference type="PROSITE-ProRule" id="PRU00407"/>
    </source>
</evidence>
<evidence type="ECO:0000255" key="5">
    <source>
        <dbReference type="PROSITE-ProRule" id="PRU01189"/>
    </source>
</evidence>
<evidence type="ECO:0000256" key="6">
    <source>
        <dbReference type="SAM" id="MobiDB-lite"/>
    </source>
</evidence>
<evidence type="ECO:0000269" key="7">
    <source>
    </source>
</evidence>
<evidence type="ECO:0000269" key="8">
    <source>
    </source>
</evidence>
<evidence type="ECO:0000269" key="9">
    <source>
    </source>
</evidence>
<evidence type="ECO:0000269" key="10">
    <source>
    </source>
</evidence>
<evidence type="ECO:0000269" key="11">
    <source>
    </source>
</evidence>
<evidence type="ECO:0000269" key="12">
    <source>
    </source>
</evidence>
<evidence type="ECO:0000269" key="13">
    <source>
    </source>
</evidence>
<evidence type="ECO:0000269" key="14">
    <source>
    </source>
</evidence>
<evidence type="ECO:0000269" key="15">
    <source>
    </source>
</evidence>
<evidence type="ECO:0000305" key="16"/>
<evidence type="ECO:0007744" key="17">
    <source>
        <dbReference type="PDB" id="2QPY"/>
    </source>
</evidence>
<evidence type="ECO:0007744" key="18">
    <source>
    </source>
</evidence>
<evidence type="ECO:0007829" key="19">
    <source>
        <dbReference type="PDB" id="2QPY"/>
    </source>
</evidence>
<gene>
    <name type="primary">Ar</name>
    <name type="synonym">Nr3c4</name>
</gene>
<comment type="function">
    <text evidence="2 3">Steroid hormone receptors are ligand-activated transcription factors that regulate eukaryotic gene expression and affect cellular proliferation and differentiation in target tissues. Transcription factor activity is modulated by bound coactivator and corepressor proteins like ZBTB7A that recruits NCOR1 and NCOR2 to the androgen response elements/ARE on target genes, negatively regulating androgen receptor signaling and androgen-induced cell proliferation. Transcription activation is also down-regulated by NR0B2. Activated, but not phosphorylated, by HIPK3 and ZIPK/DAPK3.</text>
</comment>
<comment type="subunit">
    <text evidence="2 3 7 8 9 10 11 12 13 14 15">Binds DNA as a homodimer. Part of a ternary complex containing AR, EFCAB6/DJBP and PARK7. Interacts with HIPK3 and NR0B2 in the presence of androgen. The ligand binding domain interacts with KAT7/HBO1 in the presence of dihydrotestosterone. Interacts with EFCAB6/DJBP, PQBP1, RANBP9, SPDEF, SRA1, TGFB1I1, ZNF318 and RREB1. The AR N-terminal poly-Gln region binds Ran resulting in enhancement of AR-mediated transactivation. Ran-binding decreases as the poly-Gln length increases. Interacts with ZMIZ1/ZIMP10 and ZMIZ2/ZMIP7 which both enhance its transactivation activity. Interacts with RBAK. Interacts via the ligand-binding domain with LXXLL and FXXLF motifs from NCOA1, NCOA2, NCOA3 and MAGEA11. Interacts (via nuclear receptor DNA binding domain and nuclear receptor ligand binding domain) with NCOA4 (By similarity). Interacts with HIP1 (via coiled coil domain). Interacts with SLC30A9 and RAD54L2/ARIP4. Interacts with MACROD1 (via macro domain) (By similarity). Interacts (via ligand-binding domain) with TRIM68. Interacts with TNK2. Interacts with USP26. Interacts with RNF6. Interacts (regulated by RNF6 probably through polyubiquitination) with RNF14; regulates AR transcriptional activity. Interacts with PRMT2 and TRIM24. Interacts with RACK1. Interacts with RANBP10; this interaction enhances hormone-induced AR transcriptional activity. Interacts with PRPF6 in a hormone-independent way; this interaction enhances hormone-induced AR transcriptional activity. Interacts with STK4/MST1. Interacts with ZIPK/DAPK3. Interacts with LPXN. Interacts with MAK. Part of a complex containing AR, MAK and NCOA3. Interacts with CRY1 (PubMed:22170608, PubMed:28751364). Interacts with CCAR1 and GATA2 (By similarity). Interacts with BUD31 (By similarity). Interacts with ARID4A (PubMed:23487765). Interacts with ARID4B (PubMed:23487765). Interacts (via NR LBD domain) with ZBTB7A; the interaction is direct and androgen-dependent (By similarity). Interacts with NCOR1 (By similarity). Interacts with NCOR2 (By similarity). Interacts with CRY2 in a ligand-dependent manner (PubMed:28751364).</text>
</comment>
<comment type="interaction">
    <interactant intactId="EBI-1776062">
        <id>P19091</id>
    </interactant>
    <interactant intactId="EBI-851690">
        <id>O89110</id>
        <label>Casp8</label>
    </interactant>
    <organismsDiffer>false</organismsDiffer>
    <experiments>2</experiments>
</comment>
<comment type="subcellular location">
    <subcellularLocation>
        <location evidence="2">Nucleus</location>
    </subcellularLocation>
    <subcellularLocation>
        <location evidence="2">Cytoplasm</location>
    </subcellularLocation>
    <text evidence="2">Detected at the promoter of target genes. Predominantly cytoplasmic in unligated form but translocates to the nucleus upon ligand-binding. Can also translocate to the nucleus in unligated form in the presence of RACK1.</text>
</comment>
<comment type="domain">
    <text evidence="1">Composed of three domains: a modulating N-terminal domain, a DNA-binding domain and a C-terminal ligand-binding domain. In the presence of bound steroid the ligand-binding domain interacts with the N-terminal modulating domain, and thereby activates AR transcription factor activity. Agonist binding is required for dimerization and binding to target DNA. The transcription factor activity of the complex formed by ligand-activated AR and DNA is modulated by interactions with coactivator and corepressor proteins. Interaction with RANBP9 is mediated by both the N-terminal domain and the DNA-binding domain. Interaction with EFCAB6/DJBP is mediated by the DNA-binding domain (By similarity).</text>
</comment>
<comment type="PTM">
    <text evidence="2">Phosphorylated in prostate cancer cells in response to several growth factors including EGF. Phosphorylation is induced by c-Src kinase (CSK). Tyr-514 is one of the major phosphorylation sites and an increase in phosphorylation and Src kinase activity is associated with prostate cancer progression (By similarity). Phosphorylation by TNK2 enhances the DNA-binding and transcriptional activity. Phosphorylation at Ser-61 by CDK9 regulates AR promoter selectivity and cell growth. Phosphorylation by PAK6 leads to AR-mediated transcription inhibition (By similarity).</text>
</comment>
<comment type="PTM">
    <text evidence="2">Sumoylated on Lys-381 (major) and Lys-500 (By similarity). Ubiquitinated. Deubiquitinated by USP26 (By similarity). 'Lys-6' and 'Lys-27'-linked polyubiquitination by RNF6 modulates AR transcriptional activity and specificity (By similarity).</text>
</comment>
<comment type="PTM">
    <text evidence="2">Palmitoylated by ZDHHC7 and ZDHHC21. Palmitoylation is required for plasma membrane targeting and for rapid intracellular signaling via ERK and AKT kinases and cAMP generation (By similarity).</text>
</comment>
<comment type="miscellaneous">
    <text>In the absence of ligand, steroid hormone receptors are thought to be weakly associated with nuclear components; hormone binding greatly increases receptor affinity. The hormone-receptor complex appears to recognize discrete DNA sequences upstream of transcriptional start sites.</text>
</comment>
<comment type="miscellaneous">
    <text>Transcriptional activity is enhanced by binding to RANBP9.</text>
</comment>
<comment type="similarity">
    <text evidence="16">Belongs to the nuclear hormone receptor family. NR3 subfamily.</text>
</comment>